<reference key="1">
    <citation type="submission" date="2000-10" db="EMBL/GenBank/DDBJ databases">
        <title>Cloning and identification of human TECTB.</title>
        <authorList>
            <person name="Xia J.H."/>
            <person name="Zhang H.L."/>
            <person name="Deng H."/>
            <person name="Lu C.Y."/>
            <person name="Pang Q."/>
        </authorList>
    </citation>
    <scope>NUCLEOTIDE SEQUENCE [MRNA]</scope>
    <source>
        <tissue>Brain</tissue>
    </source>
</reference>
<reference key="2">
    <citation type="journal article" date="2004" name="Nature">
        <title>The DNA sequence and comparative analysis of human chromosome 10.</title>
        <authorList>
            <person name="Deloukas P."/>
            <person name="Earthrowl M.E."/>
            <person name="Grafham D.V."/>
            <person name="Rubenfield M."/>
            <person name="French L."/>
            <person name="Steward C.A."/>
            <person name="Sims S.K."/>
            <person name="Jones M.C."/>
            <person name="Searle S."/>
            <person name="Scott C."/>
            <person name="Howe K."/>
            <person name="Hunt S.E."/>
            <person name="Andrews T.D."/>
            <person name="Gilbert J.G.R."/>
            <person name="Swarbreck D."/>
            <person name="Ashurst J.L."/>
            <person name="Taylor A."/>
            <person name="Battles J."/>
            <person name="Bird C.P."/>
            <person name="Ainscough R."/>
            <person name="Almeida J.P."/>
            <person name="Ashwell R.I.S."/>
            <person name="Ambrose K.D."/>
            <person name="Babbage A.K."/>
            <person name="Bagguley C.L."/>
            <person name="Bailey J."/>
            <person name="Banerjee R."/>
            <person name="Bates K."/>
            <person name="Beasley H."/>
            <person name="Bray-Allen S."/>
            <person name="Brown A.J."/>
            <person name="Brown J.Y."/>
            <person name="Burford D.C."/>
            <person name="Burrill W."/>
            <person name="Burton J."/>
            <person name="Cahill P."/>
            <person name="Camire D."/>
            <person name="Carter N.P."/>
            <person name="Chapman J.C."/>
            <person name="Clark S.Y."/>
            <person name="Clarke G."/>
            <person name="Clee C.M."/>
            <person name="Clegg S."/>
            <person name="Corby N."/>
            <person name="Coulson A."/>
            <person name="Dhami P."/>
            <person name="Dutta I."/>
            <person name="Dunn M."/>
            <person name="Faulkner L."/>
            <person name="Frankish A."/>
            <person name="Frankland J.A."/>
            <person name="Garner P."/>
            <person name="Garnett J."/>
            <person name="Gribble S."/>
            <person name="Griffiths C."/>
            <person name="Grocock R."/>
            <person name="Gustafson E."/>
            <person name="Hammond S."/>
            <person name="Harley J.L."/>
            <person name="Hart E."/>
            <person name="Heath P.D."/>
            <person name="Ho T.P."/>
            <person name="Hopkins B."/>
            <person name="Horne J."/>
            <person name="Howden P.J."/>
            <person name="Huckle E."/>
            <person name="Hynds C."/>
            <person name="Johnson C."/>
            <person name="Johnson D."/>
            <person name="Kana A."/>
            <person name="Kay M."/>
            <person name="Kimberley A.M."/>
            <person name="Kershaw J.K."/>
            <person name="Kokkinaki M."/>
            <person name="Laird G.K."/>
            <person name="Lawlor S."/>
            <person name="Lee H.M."/>
            <person name="Leongamornlert D.A."/>
            <person name="Laird G."/>
            <person name="Lloyd C."/>
            <person name="Lloyd D.M."/>
            <person name="Loveland J."/>
            <person name="Lovell J."/>
            <person name="McLaren S."/>
            <person name="McLay K.E."/>
            <person name="McMurray A."/>
            <person name="Mashreghi-Mohammadi M."/>
            <person name="Matthews L."/>
            <person name="Milne S."/>
            <person name="Nickerson T."/>
            <person name="Nguyen M."/>
            <person name="Overton-Larty E."/>
            <person name="Palmer S.A."/>
            <person name="Pearce A.V."/>
            <person name="Peck A.I."/>
            <person name="Pelan S."/>
            <person name="Phillimore B."/>
            <person name="Porter K."/>
            <person name="Rice C.M."/>
            <person name="Rogosin A."/>
            <person name="Ross M.T."/>
            <person name="Sarafidou T."/>
            <person name="Sehra H.K."/>
            <person name="Shownkeen R."/>
            <person name="Skuce C.D."/>
            <person name="Smith M."/>
            <person name="Standring L."/>
            <person name="Sycamore N."/>
            <person name="Tester J."/>
            <person name="Thorpe A."/>
            <person name="Torcasso W."/>
            <person name="Tracey A."/>
            <person name="Tromans A."/>
            <person name="Tsolas J."/>
            <person name="Wall M."/>
            <person name="Walsh J."/>
            <person name="Wang H."/>
            <person name="Weinstock K."/>
            <person name="West A.P."/>
            <person name="Willey D.L."/>
            <person name="Whitehead S.L."/>
            <person name="Wilming L."/>
            <person name="Wray P.W."/>
            <person name="Young L."/>
            <person name="Chen Y."/>
            <person name="Lovering R.C."/>
            <person name="Moschonas N.K."/>
            <person name="Siebert R."/>
            <person name="Fechtel K."/>
            <person name="Bentley D."/>
            <person name="Durbin R.M."/>
            <person name="Hubbard T."/>
            <person name="Doucette-Stamm L."/>
            <person name="Beck S."/>
            <person name="Smith D.R."/>
            <person name="Rogers J."/>
        </authorList>
    </citation>
    <scope>NUCLEOTIDE SEQUENCE [LARGE SCALE GENOMIC DNA]</scope>
</reference>
<reference key="3">
    <citation type="journal article" date="2004" name="Genome Res.">
        <title>The status, quality, and expansion of the NIH full-length cDNA project: the Mammalian Gene Collection (MGC).</title>
        <authorList>
            <consortium name="The MGC Project Team"/>
        </authorList>
    </citation>
    <scope>NUCLEOTIDE SEQUENCE [LARGE SCALE MRNA]</scope>
</reference>
<dbReference type="EMBL" id="AF312827">
    <property type="protein sequence ID" value="AAL12829.1"/>
    <property type="molecule type" value="mRNA"/>
</dbReference>
<dbReference type="EMBL" id="AL391986">
    <property type="status" value="NOT_ANNOTATED_CDS"/>
    <property type="molecule type" value="Genomic_DNA"/>
</dbReference>
<dbReference type="EMBL" id="BC113497">
    <property type="protein sequence ID" value="AAI13498.1"/>
    <property type="molecule type" value="mRNA"/>
</dbReference>
<dbReference type="EMBL" id="BC113499">
    <property type="protein sequence ID" value="AAI13500.1"/>
    <property type="molecule type" value="mRNA"/>
</dbReference>
<dbReference type="CCDS" id="CCDS7571.1"/>
<dbReference type="RefSeq" id="NP_478129.1">
    <property type="nucleotide sequence ID" value="NM_058222.3"/>
</dbReference>
<dbReference type="SMR" id="Q96PL2"/>
<dbReference type="BioGRID" id="112835">
    <property type="interactions" value="42"/>
</dbReference>
<dbReference type="FunCoup" id="Q96PL2">
    <property type="interactions" value="64"/>
</dbReference>
<dbReference type="IntAct" id="Q96PL2">
    <property type="interactions" value="36"/>
</dbReference>
<dbReference type="STRING" id="9606.ENSP00000494896"/>
<dbReference type="GlyCosmos" id="Q96PL2">
    <property type="glycosylation" value="4 sites, No reported glycans"/>
</dbReference>
<dbReference type="GlyGen" id="Q96PL2">
    <property type="glycosylation" value="5 sites"/>
</dbReference>
<dbReference type="iPTMnet" id="Q96PL2"/>
<dbReference type="BioMuta" id="TECTB"/>
<dbReference type="DMDM" id="48428669"/>
<dbReference type="jPOST" id="Q96PL2"/>
<dbReference type="PaxDb" id="9606-ENSP00000358430"/>
<dbReference type="PeptideAtlas" id="Q96PL2"/>
<dbReference type="Antibodypedia" id="53513">
    <property type="antibodies" value="83 antibodies from 12 providers"/>
</dbReference>
<dbReference type="DNASU" id="6975"/>
<dbReference type="Ensembl" id="ENST00000369422.4">
    <property type="protein sequence ID" value="ENSP00000358430.3"/>
    <property type="gene ID" value="ENSG00000119913.6"/>
</dbReference>
<dbReference type="Ensembl" id="ENST00000646139.2">
    <property type="protein sequence ID" value="ENSP00000494896.1"/>
    <property type="gene ID" value="ENSG00000119913.6"/>
</dbReference>
<dbReference type="GeneID" id="6975"/>
<dbReference type="KEGG" id="hsa:6975"/>
<dbReference type="MANE-Select" id="ENST00000646139.2">
    <property type="protein sequence ID" value="ENSP00000494896.1"/>
    <property type="RefSeq nucleotide sequence ID" value="NM_058222.3"/>
    <property type="RefSeq protein sequence ID" value="NP_478129.1"/>
</dbReference>
<dbReference type="UCSC" id="uc001kzr.3">
    <property type="organism name" value="human"/>
</dbReference>
<dbReference type="AGR" id="HGNC:11721"/>
<dbReference type="CTD" id="6975"/>
<dbReference type="DisGeNET" id="6975"/>
<dbReference type="GeneCards" id="TECTB"/>
<dbReference type="HGNC" id="HGNC:11721">
    <property type="gene designation" value="TECTB"/>
</dbReference>
<dbReference type="HPA" id="ENSG00000119913">
    <property type="expression patterns" value="Not detected"/>
</dbReference>
<dbReference type="MIM" id="602653">
    <property type="type" value="gene"/>
</dbReference>
<dbReference type="neXtProt" id="NX_Q96PL2"/>
<dbReference type="OpenTargets" id="ENSG00000119913"/>
<dbReference type="PharmGKB" id="PA36438"/>
<dbReference type="VEuPathDB" id="HostDB:ENSG00000119913"/>
<dbReference type="eggNOG" id="ENOG502RGQ6">
    <property type="taxonomic scope" value="Eukaryota"/>
</dbReference>
<dbReference type="GeneTree" id="ENSGT00940000159064"/>
<dbReference type="HOGENOM" id="CLU_073084_0_0_1"/>
<dbReference type="InParanoid" id="Q96PL2"/>
<dbReference type="OMA" id="CETHICD"/>
<dbReference type="OrthoDB" id="9856536at2759"/>
<dbReference type="PAN-GO" id="Q96PL2">
    <property type="GO annotations" value="3 GO annotations based on evolutionary models"/>
</dbReference>
<dbReference type="PhylomeDB" id="Q96PL2"/>
<dbReference type="TreeFam" id="TF330284"/>
<dbReference type="PathwayCommons" id="Q96PL2"/>
<dbReference type="Reactome" id="R-HSA-163125">
    <property type="pathway name" value="Post-translational modification: synthesis of GPI-anchored proteins"/>
</dbReference>
<dbReference type="BioGRID-ORCS" id="6975">
    <property type="hits" value="8 hits in 1136 CRISPR screens"/>
</dbReference>
<dbReference type="ChiTaRS" id="TECTB">
    <property type="organism name" value="human"/>
</dbReference>
<dbReference type="GeneWiki" id="TECTB"/>
<dbReference type="GenomeRNAi" id="6975"/>
<dbReference type="Pharos" id="Q96PL2">
    <property type="development level" value="Tbio"/>
</dbReference>
<dbReference type="PRO" id="PR:Q96PL2"/>
<dbReference type="Proteomes" id="UP000005640">
    <property type="component" value="Chromosome 10"/>
</dbReference>
<dbReference type="RNAct" id="Q96PL2">
    <property type="molecule type" value="protein"/>
</dbReference>
<dbReference type="Bgee" id="ENSG00000119913">
    <property type="expression patterns" value="Expressed in pigmented layer of retina and 15 other cell types or tissues"/>
</dbReference>
<dbReference type="ExpressionAtlas" id="Q96PL2">
    <property type="expression patterns" value="baseline and differential"/>
</dbReference>
<dbReference type="GO" id="GO:0009986">
    <property type="term" value="C:cell surface"/>
    <property type="evidence" value="ECO:0000318"/>
    <property type="project" value="GO_Central"/>
</dbReference>
<dbReference type="GO" id="GO:0031012">
    <property type="term" value="C:extracellular matrix"/>
    <property type="evidence" value="ECO:0007669"/>
    <property type="project" value="Ensembl"/>
</dbReference>
<dbReference type="GO" id="GO:0005576">
    <property type="term" value="C:extracellular region"/>
    <property type="evidence" value="ECO:0000304"/>
    <property type="project" value="Reactome"/>
</dbReference>
<dbReference type="GO" id="GO:0005615">
    <property type="term" value="C:extracellular space"/>
    <property type="evidence" value="ECO:0000318"/>
    <property type="project" value="GO_Central"/>
</dbReference>
<dbReference type="GO" id="GO:0005886">
    <property type="term" value="C:plasma membrane"/>
    <property type="evidence" value="ECO:0000304"/>
    <property type="project" value="Reactome"/>
</dbReference>
<dbReference type="GO" id="GO:0098552">
    <property type="term" value="C:side of membrane"/>
    <property type="evidence" value="ECO:0007669"/>
    <property type="project" value="UniProtKB-KW"/>
</dbReference>
<dbReference type="GO" id="GO:0005201">
    <property type="term" value="F:extracellular matrix structural constituent"/>
    <property type="evidence" value="ECO:0000318"/>
    <property type="project" value="GO_Central"/>
</dbReference>
<dbReference type="FunFam" id="2.60.40.4100:FF:000006">
    <property type="entry name" value="beta-tectorin"/>
    <property type="match status" value="1"/>
</dbReference>
<dbReference type="Gene3D" id="2.60.40.4100">
    <property type="entry name" value="Zona pellucida, ZP-C domain"/>
    <property type="match status" value="1"/>
</dbReference>
<dbReference type="InterPro" id="IPR055355">
    <property type="entry name" value="ZP-C"/>
</dbReference>
<dbReference type="InterPro" id="IPR042235">
    <property type="entry name" value="ZP-C_dom"/>
</dbReference>
<dbReference type="InterPro" id="IPR048290">
    <property type="entry name" value="ZP_chr"/>
</dbReference>
<dbReference type="InterPro" id="IPR001507">
    <property type="entry name" value="ZP_dom"/>
</dbReference>
<dbReference type="InterPro" id="IPR017977">
    <property type="entry name" value="ZP_dom_CS"/>
</dbReference>
<dbReference type="PANTHER" id="PTHR14002:SF13">
    <property type="entry name" value="BETA-TECTORIN"/>
    <property type="match status" value="1"/>
</dbReference>
<dbReference type="PANTHER" id="PTHR14002">
    <property type="entry name" value="ENDOGLIN/TGF-BETA RECEPTOR TYPE III"/>
    <property type="match status" value="1"/>
</dbReference>
<dbReference type="Pfam" id="PF00100">
    <property type="entry name" value="Zona_pellucida"/>
    <property type="match status" value="1"/>
</dbReference>
<dbReference type="PRINTS" id="PR00023">
    <property type="entry name" value="ZPELLUCIDA"/>
</dbReference>
<dbReference type="SMART" id="SM00241">
    <property type="entry name" value="ZP"/>
    <property type="match status" value="1"/>
</dbReference>
<dbReference type="PROSITE" id="PS00682">
    <property type="entry name" value="ZP_1"/>
    <property type="match status" value="1"/>
</dbReference>
<dbReference type="PROSITE" id="PS51034">
    <property type="entry name" value="ZP_2"/>
    <property type="match status" value="1"/>
</dbReference>
<keyword id="KW-1003">Cell membrane</keyword>
<keyword id="KW-1015">Disulfide bond</keyword>
<keyword id="KW-0272">Extracellular matrix</keyword>
<keyword id="KW-0325">Glycoprotein</keyword>
<keyword id="KW-0336">GPI-anchor</keyword>
<keyword id="KW-0449">Lipoprotein</keyword>
<keyword id="KW-0472">Membrane</keyword>
<keyword id="KW-1185">Reference proteome</keyword>
<keyword id="KW-0964">Secreted</keyword>
<keyword id="KW-0732">Signal</keyword>
<name>TECTB_HUMAN</name>
<gene>
    <name type="primary">TECTB</name>
</gene>
<evidence type="ECO:0000250" key="1"/>
<evidence type="ECO:0000250" key="2">
    <source>
        <dbReference type="UniProtKB" id="O08524"/>
    </source>
</evidence>
<evidence type="ECO:0000255" key="3"/>
<evidence type="ECO:0000255" key="4">
    <source>
        <dbReference type="PROSITE-ProRule" id="PRU00375"/>
    </source>
</evidence>
<evidence type="ECO:0000305" key="5"/>
<feature type="signal peptide" evidence="3">
    <location>
        <begin position="1"/>
        <end position="17"/>
    </location>
</feature>
<feature type="chain" id="PRO_0000041741" description="Beta-tectorin">
    <location>
        <begin position="18"/>
        <end position="305"/>
    </location>
</feature>
<feature type="propeptide" id="PRO_0000041742" description="Removed in mature form" evidence="3">
    <location>
        <begin position="306"/>
        <end position="329"/>
    </location>
</feature>
<feature type="domain" description="ZP" evidence="4">
    <location>
        <begin position="19"/>
        <end position="283"/>
    </location>
</feature>
<feature type="lipid moiety-binding region" description="GPI-anchor amidated glycine" evidence="3">
    <location>
        <position position="305"/>
    </location>
</feature>
<feature type="glycosylation site" description="N-linked (GlcNAc...) asparagine" evidence="3">
    <location>
        <position position="80"/>
    </location>
</feature>
<feature type="glycosylation site" description="N-linked (GlcNAc...) asparagine" evidence="3">
    <location>
        <position position="104"/>
    </location>
</feature>
<feature type="glycosylation site" description="N-linked (GlcNAc...) asparagine" evidence="3">
    <location>
        <position position="116"/>
    </location>
</feature>
<feature type="glycosylation site" description="N-linked (GlcNAc...) asparagine" evidence="3">
    <location>
        <position position="145"/>
    </location>
</feature>
<feature type="disulfide bond" evidence="1">
    <location>
        <begin position="204"/>
        <end position="264"/>
    </location>
</feature>
<proteinExistence type="evidence at transcript level"/>
<comment type="function">
    <text evidence="1">One of the major non-collagenous components of the tectorial membrane (By similarity). The tectorial membrane is an extracellular matrix of the inner ear that covers the neuroepithelium of the cochlea and contacts the stereocilia bundles of specialized sensory hair cells. Sound induces movement of these hair cells relative to the tectorial membrane, deflects the stereocilia and leads to fluctuations in hair-cell membrane potential, transducing sound into electrical signals.</text>
</comment>
<comment type="subunit">
    <text evidence="2 5">May form homomeric filament after self-association or heteromeric filament after association with alpha-tectorin (Probable). Interacts with CEACAM16 (By similarity).</text>
</comment>
<comment type="subcellular location">
    <subcellularLocation>
        <location evidence="5">Cell membrane</location>
        <topology evidence="5">Lipid-anchor</topology>
        <topology evidence="5">GPI-anchor</topology>
        <orientation evidence="5">Extracellular side</orientation>
    </subcellularLocation>
    <subcellularLocation>
        <location>Secreted</location>
        <location>Extracellular space</location>
        <location>Extracellular matrix</location>
    </subcellularLocation>
    <text evidence="1">Found in the non-collagenous matrix of the tectorial membrane.</text>
</comment>
<comment type="domain">
    <text>Zona pellucida domain may enable to form filaments.</text>
</comment>
<comment type="PTM">
    <text>The presence of a hydrophobic C-terminus preceded by a potential cleavage site strongly suggests that tectorins are synthesized as glycosylphosphatidylinositol-linked, membrane-bound precursors. Tectorins are targeted to the apical surface of the inner ear epithelia by the lipid and proteolytically released into the extracellular compartment.</text>
</comment>
<accession>Q96PL2</accession>
<accession>Q5VW53</accession>
<protein>
    <recommendedName>
        <fullName>Beta-tectorin</fullName>
    </recommendedName>
</protein>
<sequence>MVTKAFVLLAIFAEASAKSCAPNKADVILVFCYPKTIITKIPECPYGWEVHQLALGGLCYNGVHEGGYYQFVIPDLSPKNKSYCGTQSEYKPPIYHFYSHIVSNDTTVIVKNQPVNYSFSCTYHSTYLVNQAAFDQRVATVHVKNGSMGTFESQLSLNFYTNAKFSIKKEAPFVLEASEIGSDLFAGVEAKGLSIRFKVVLNSCWATPSADFMYPLQWQLINKGCPTDETVLVHENGRDHRATFQFNAFRFQNIPKLSKVWLHCETFICDSEKLSCPVTCDKRKRLLRDQTGGVLVVELSLRSRGFSSLYSFSDVLHHLIMMLGICAVL</sequence>
<organism>
    <name type="scientific">Homo sapiens</name>
    <name type="common">Human</name>
    <dbReference type="NCBI Taxonomy" id="9606"/>
    <lineage>
        <taxon>Eukaryota</taxon>
        <taxon>Metazoa</taxon>
        <taxon>Chordata</taxon>
        <taxon>Craniata</taxon>
        <taxon>Vertebrata</taxon>
        <taxon>Euteleostomi</taxon>
        <taxon>Mammalia</taxon>
        <taxon>Eutheria</taxon>
        <taxon>Euarchontoglires</taxon>
        <taxon>Primates</taxon>
        <taxon>Haplorrhini</taxon>
        <taxon>Catarrhini</taxon>
        <taxon>Hominidae</taxon>
        <taxon>Homo</taxon>
    </lineage>
</organism>